<accession>P30011</accession>
<accession>Q2MCG5</accession>
<gene>
    <name type="primary">nadC</name>
    <name type="ordered locus">b0109</name>
    <name type="ordered locus">JW0105</name>
</gene>
<reference key="1">
    <citation type="journal article" date="1994" name="Gene">
        <title>Escherichia coli contains a set of genes homologous to those involved in protein secretion, DNA uptake and the assembly of type-4 fimbriae in other bacteria.</title>
        <authorList>
            <person name="Whitchurch C.B."/>
            <person name="Mattick J.S."/>
        </authorList>
    </citation>
    <scope>NUCLEOTIDE SEQUENCE [GENOMIC DNA]</scope>
    <source>
        <strain>K12</strain>
    </source>
</reference>
<reference key="2">
    <citation type="journal article" date="1996" name="Arch. Biochem. Biophys.">
        <title>The sequencing expression, purification, and steady-state kinetic analysis of quinolinate phosphoribosyl transferase from Escherichia coli.</title>
        <authorList>
            <person name="Bhatia R.S."/>
            <person name="Calvo K.C."/>
        </authorList>
    </citation>
    <scope>NUCLEOTIDE SEQUENCE [GENOMIC DNA]</scope>
    <scope>FUNCTION</scope>
    <scope>CATALYTIC ACTIVITY</scope>
    <scope>BIOPHYSICOCHEMICAL PROPERTIES</scope>
    <scope>PATHWAY</scope>
    <source>
        <strain>K12</strain>
    </source>
</reference>
<reference key="3">
    <citation type="journal article" date="1994" name="Nucleic Acids Res.">
        <title>Systematic sequencing of the Escherichia coli genome: analysis of the 2.4-4.1 min (110,917-193,643 bp) region.</title>
        <authorList>
            <person name="Fujita N."/>
            <person name="Mori H."/>
            <person name="Yura T."/>
            <person name="Ishihama A."/>
        </authorList>
    </citation>
    <scope>NUCLEOTIDE SEQUENCE [LARGE SCALE GENOMIC DNA]</scope>
    <source>
        <strain>K12 / W3110 / ATCC 27325 / DSM 5911</strain>
    </source>
</reference>
<reference key="4">
    <citation type="journal article" date="1997" name="Science">
        <title>The complete genome sequence of Escherichia coli K-12.</title>
        <authorList>
            <person name="Blattner F.R."/>
            <person name="Plunkett G. III"/>
            <person name="Bloch C.A."/>
            <person name="Perna N.T."/>
            <person name="Burland V."/>
            <person name="Riley M."/>
            <person name="Collado-Vides J."/>
            <person name="Glasner J.D."/>
            <person name="Rode C.K."/>
            <person name="Mayhew G.F."/>
            <person name="Gregor J."/>
            <person name="Davis N.W."/>
            <person name="Kirkpatrick H.A."/>
            <person name="Goeden M.A."/>
            <person name="Rose D.J."/>
            <person name="Mau B."/>
            <person name="Shao Y."/>
        </authorList>
    </citation>
    <scope>NUCLEOTIDE SEQUENCE [LARGE SCALE GENOMIC DNA]</scope>
    <source>
        <strain>K12 / MG1655 / ATCC 47076</strain>
    </source>
</reference>
<reference key="5">
    <citation type="journal article" date="2006" name="Mol. Syst. Biol.">
        <title>Highly accurate genome sequences of Escherichia coli K-12 strains MG1655 and W3110.</title>
        <authorList>
            <person name="Hayashi K."/>
            <person name="Morooka N."/>
            <person name="Yamamoto Y."/>
            <person name="Fujita K."/>
            <person name="Isono K."/>
            <person name="Choi S."/>
            <person name="Ohtsubo E."/>
            <person name="Baba T."/>
            <person name="Wanner B.L."/>
            <person name="Mori H."/>
            <person name="Horiuchi T."/>
        </authorList>
    </citation>
    <scope>NUCLEOTIDE SEQUENCE [LARGE SCALE GENOMIC DNA]</scope>
    <source>
        <strain>K12 / W3110 / ATCC 27325 / DSM 5911</strain>
    </source>
</reference>
<reference key="6">
    <citation type="journal article" date="1989" name="Mol. Microbiol.">
        <title>Signalling proteins in enterobacterial AmpC beta-lactamase regulation.</title>
        <authorList>
            <person name="Lindquist S."/>
            <person name="Galleni M."/>
            <person name="Lindberg F."/>
            <person name="Normark S."/>
        </authorList>
    </citation>
    <scope>NUCLEOTIDE SEQUENCE [GENOMIC DNA] OF 1-116</scope>
    <source>
        <strain>K12</strain>
    </source>
</reference>
<reference key="7">
    <citation type="journal article" date="1989" name="Mol. Microbiol.">
        <title>Regulation of enterobacterial cephalosporinase production: the role of a membrane-bound sensory transducer.</title>
        <authorList>
            <person name="Honore N."/>
            <person name="Nicolas M.H."/>
            <person name="Cole S.T."/>
        </authorList>
    </citation>
    <scope>NUCLEOTIDE SEQUENCE [GENOMIC DNA] OF 1-116</scope>
    <source>
        <strain>K12</strain>
    </source>
</reference>
<reference key="8">
    <citation type="journal article" date="1993" name="J. Bacteriol.">
        <title>The Salmonella typhimurium nadC gene: sequence determination by use of Mud-P22 and purification of quinolinate phosphoribosyltransferase.</title>
        <authorList>
            <person name="Hughes K.T."/>
            <person name="Dessen A."/>
            <person name="Gray J.P."/>
            <person name="Grubmeyer C."/>
        </authorList>
    </citation>
    <scope>IDENTIFICATION</scope>
</reference>
<comment type="function">
    <text evidence="2">Involved in the catabolism of quinolinic acid (QA).</text>
</comment>
<comment type="catalytic activity">
    <reaction evidence="2">
        <text>nicotinate beta-D-ribonucleotide + CO2 + diphosphate = quinolinate + 5-phospho-alpha-D-ribose 1-diphosphate + 2 H(+)</text>
        <dbReference type="Rhea" id="RHEA:12733"/>
        <dbReference type="ChEBI" id="CHEBI:15378"/>
        <dbReference type="ChEBI" id="CHEBI:16526"/>
        <dbReference type="ChEBI" id="CHEBI:29959"/>
        <dbReference type="ChEBI" id="CHEBI:33019"/>
        <dbReference type="ChEBI" id="CHEBI:57502"/>
        <dbReference type="ChEBI" id="CHEBI:58017"/>
        <dbReference type="EC" id="2.4.2.19"/>
    </reaction>
    <physiologicalReaction direction="right-to-left" evidence="2">
        <dbReference type="Rhea" id="RHEA:12735"/>
    </physiologicalReaction>
</comment>
<comment type="biophysicochemical properties">
    <kinetics>
        <KM evidence="2">15.6 uM for 5-phospho-alpha-D-ribose (at pH 7.8)</KM>
        <KM evidence="2">6.4 uM for quinolinate (at pH 7.8)</KM>
        <Vmax evidence="2">0.96 umol/min/mg enzyme (at pH 7.8)</Vmax>
    </kinetics>
</comment>
<comment type="pathway">
    <text evidence="5">Cofactor biosynthesis; NAD(+) biosynthesis; nicotinate D-ribonucleotide from quinolinate: step 1/1.</text>
</comment>
<comment type="subunit">
    <text evidence="1">Homodimer Hexamer formed by 3 homodimers (By similarity). Homodimer.</text>
</comment>
<comment type="similarity">
    <text evidence="4">Belongs to the NadC/ModD family.</text>
</comment>
<proteinExistence type="evidence at protein level"/>
<name>NADC_ECOLI</name>
<protein>
    <recommendedName>
        <fullName>Nicotinate-nucleotide pyrophosphorylase [carboxylating]</fullName>
        <ecNumber evidence="2">2.4.2.19</ecNumber>
    </recommendedName>
    <alternativeName>
        <fullName evidence="3">Quinolinate phosphoribosyltransferase [decarboxylating]</fullName>
        <shortName>QAPRTase</shortName>
    </alternativeName>
</protein>
<organism>
    <name type="scientific">Escherichia coli (strain K12)</name>
    <dbReference type="NCBI Taxonomy" id="83333"/>
    <lineage>
        <taxon>Bacteria</taxon>
        <taxon>Pseudomonadati</taxon>
        <taxon>Pseudomonadota</taxon>
        <taxon>Gammaproteobacteria</taxon>
        <taxon>Enterobacterales</taxon>
        <taxon>Enterobacteriaceae</taxon>
        <taxon>Escherichia</taxon>
    </lineage>
</organism>
<dbReference type="EC" id="2.4.2.19" evidence="2"/>
<dbReference type="EMBL" id="L28105">
    <property type="protein sequence ID" value="AAC36922.1"/>
    <property type="molecule type" value="Genomic_DNA"/>
</dbReference>
<dbReference type="EMBL" id="L20833">
    <property type="protein sequence ID" value="AAB00467.1"/>
    <property type="molecule type" value="Genomic_DNA"/>
</dbReference>
<dbReference type="EMBL" id="U00096">
    <property type="protein sequence ID" value="AAC73220.1"/>
    <property type="molecule type" value="Genomic_DNA"/>
</dbReference>
<dbReference type="EMBL" id="AP009048">
    <property type="protein sequence ID" value="BAE76041.1"/>
    <property type="molecule type" value="Genomic_DNA"/>
</dbReference>
<dbReference type="EMBL" id="X15237">
    <property type="status" value="NOT_ANNOTATED_CDS"/>
    <property type="molecule type" value="Genomic_DNA"/>
</dbReference>
<dbReference type="PIR" id="E64733">
    <property type="entry name" value="E64733"/>
</dbReference>
<dbReference type="RefSeq" id="NP_414651.1">
    <property type="nucleotide sequence ID" value="NC_000913.3"/>
</dbReference>
<dbReference type="RefSeq" id="WP_001135174.1">
    <property type="nucleotide sequence ID" value="NZ_STEB01000010.1"/>
</dbReference>
<dbReference type="SMR" id="P30011"/>
<dbReference type="BioGRID" id="4263544">
    <property type="interactions" value="22"/>
</dbReference>
<dbReference type="DIP" id="DIP-10293N"/>
<dbReference type="FunCoup" id="P30011">
    <property type="interactions" value="784"/>
</dbReference>
<dbReference type="IntAct" id="P30011">
    <property type="interactions" value="4"/>
</dbReference>
<dbReference type="STRING" id="511145.b0109"/>
<dbReference type="jPOST" id="P30011"/>
<dbReference type="PaxDb" id="511145-b0109"/>
<dbReference type="EnsemblBacteria" id="AAC73220">
    <property type="protein sequence ID" value="AAC73220"/>
    <property type="gene ID" value="b0109"/>
</dbReference>
<dbReference type="GeneID" id="948869"/>
<dbReference type="KEGG" id="ecj:JW0105"/>
<dbReference type="KEGG" id="eco:b0109"/>
<dbReference type="KEGG" id="ecoc:C3026_00450"/>
<dbReference type="PATRIC" id="fig|1411691.4.peg.2173"/>
<dbReference type="EchoBASE" id="EB1508"/>
<dbReference type="eggNOG" id="COG0157">
    <property type="taxonomic scope" value="Bacteria"/>
</dbReference>
<dbReference type="HOGENOM" id="CLU_039622_0_3_6"/>
<dbReference type="InParanoid" id="P30011"/>
<dbReference type="OMA" id="DIVMCDN"/>
<dbReference type="OrthoDB" id="9782546at2"/>
<dbReference type="PhylomeDB" id="P30011"/>
<dbReference type="BioCyc" id="EcoCyc:QUINOPRIBOTRANS-MONOMER"/>
<dbReference type="BioCyc" id="MetaCyc:QUINOPRIBOTRANS-MONOMER"/>
<dbReference type="BRENDA" id="2.4.2.19">
    <property type="organism ID" value="2026"/>
</dbReference>
<dbReference type="SABIO-RK" id="P30011"/>
<dbReference type="UniPathway" id="UPA00253">
    <property type="reaction ID" value="UER00331"/>
</dbReference>
<dbReference type="PRO" id="PR:P30011"/>
<dbReference type="Proteomes" id="UP000000625">
    <property type="component" value="Chromosome"/>
</dbReference>
<dbReference type="GO" id="GO:0005737">
    <property type="term" value="C:cytoplasm"/>
    <property type="evidence" value="ECO:0000314"/>
    <property type="project" value="EcoliWiki"/>
</dbReference>
<dbReference type="GO" id="GO:0005829">
    <property type="term" value="C:cytosol"/>
    <property type="evidence" value="ECO:0000314"/>
    <property type="project" value="EcoCyc"/>
</dbReference>
<dbReference type="GO" id="GO:0004514">
    <property type="term" value="F:nicotinate-nucleotide diphosphorylase (carboxylating) activity"/>
    <property type="evidence" value="ECO:0000314"/>
    <property type="project" value="EcoCyc"/>
</dbReference>
<dbReference type="GO" id="GO:0034628">
    <property type="term" value="P:'de novo' NAD biosynthetic process from L-aspartate"/>
    <property type="evidence" value="ECO:0000315"/>
    <property type="project" value="EcoCyc"/>
</dbReference>
<dbReference type="GO" id="GO:0009435">
    <property type="term" value="P:NAD biosynthetic process"/>
    <property type="evidence" value="ECO:0000314"/>
    <property type="project" value="EcoliWiki"/>
</dbReference>
<dbReference type="GO" id="GO:0034213">
    <property type="term" value="P:quinolinate catabolic process"/>
    <property type="evidence" value="ECO:0000318"/>
    <property type="project" value="GO_Central"/>
</dbReference>
<dbReference type="CDD" id="cd01572">
    <property type="entry name" value="QPRTase"/>
    <property type="match status" value="1"/>
</dbReference>
<dbReference type="FunFam" id="3.90.1170.20:FF:000002">
    <property type="entry name" value="Nicotinate-nucleotide pyrophosphorylase [carboxylating]"/>
    <property type="match status" value="1"/>
</dbReference>
<dbReference type="FunFam" id="3.20.20.70:FF:000030">
    <property type="entry name" value="Nicotinate-nucleotide pyrophosphorylase, carboxylating"/>
    <property type="match status" value="1"/>
</dbReference>
<dbReference type="Gene3D" id="3.20.20.70">
    <property type="entry name" value="Aldolase class I"/>
    <property type="match status" value="1"/>
</dbReference>
<dbReference type="Gene3D" id="3.90.1170.20">
    <property type="entry name" value="Quinolinate phosphoribosyl transferase, N-terminal domain"/>
    <property type="match status" value="1"/>
</dbReference>
<dbReference type="InterPro" id="IPR013785">
    <property type="entry name" value="Aldolase_TIM"/>
</dbReference>
<dbReference type="InterPro" id="IPR004393">
    <property type="entry name" value="NadC"/>
</dbReference>
<dbReference type="InterPro" id="IPR027277">
    <property type="entry name" value="NadC/ModD"/>
</dbReference>
<dbReference type="InterPro" id="IPR036068">
    <property type="entry name" value="Nicotinate_pribotase-like_C"/>
</dbReference>
<dbReference type="InterPro" id="IPR037128">
    <property type="entry name" value="Quinolinate_PRibosylTase_N_sf"/>
</dbReference>
<dbReference type="InterPro" id="IPR002638">
    <property type="entry name" value="Quinolinate_PRibosylTrfase_C"/>
</dbReference>
<dbReference type="InterPro" id="IPR022412">
    <property type="entry name" value="Quinolinate_PRibosylTrfase_N"/>
</dbReference>
<dbReference type="NCBIfam" id="TIGR00078">
    <property type="entry name" value="nadC"/>
    <property type="match status" value="1"/>
</dbReference>
<dbReference type="PANTHER" id="PTHR32179">
    <property type="entry name" value="NICOTINATE-NUCLEOTIDE PYROPHOSPHORYLASE [CARBOXYLATING]"/>
    <property type="match status" value="1"/>
</dbReference>
<dbReference type="PANTHER" id="PTHR32179:SF3">
    <property type="entry name" value="NICOTINATE-NUCLEOTIDE PYROPHOSPHORYLASE [CARBOXYLATING]"/>
    <property type="match status" value="1"/>
</dbReference>
<dbReference type="Pfam" id="PF01729">
    <property type="entry name" value="QRPTase_C"/>
    <property type="match status" value="1"/>
</dbReference>
<dbReference type="Pfam" id="PF02749">
    <property type="entry name" value="QRPTase_N"/>
    <property type="match status" value="1"/>
</dbReference>
<dbReference type="PIRSF" id="PIRSF006250">
    <property type="entry name" value="NadC_ModD"/>
    <property type="match status" value="1"/>
</dbReference>
<dbReference type="SUPFAM" id="SSF51690">
    <property type="entry name" value="Nicotinate/Quinolinate PRTase C-terminal domain-like"/>
    <property type="match status" value="1"/>
</dbReference>
<dbReference type="SUPFAM" id="SSF54675">
    <property type="entry name" value="Nicotinate/Quinolinate PRTase N-terminal domain-like"/>
    <property type="match status" value="1"/>
</dbReference>
<feature type="initiator methionine" description="Removed" evidence="1">
    <location>
        <position position="1"/>
    </location>
</feature>
<feature type="chain" id="PRO_0000155942" description="Nicotinate-nucleotide pyrophosphorylase [carboxylating]">
    <location>
        <begin position="2"/>
        <end position="297"/>
    </location>
</feature>
<feature type="binding site" evidence="1">
    <location>
        <position position="119"/>
    </location>
    <ligand>
        <name>substrate</name>
    </ligand>
</feature>
<feature type="binding site" evidence="1">
    <location>
        <begin position="152"/>
        <end position="154"/>
    </location>
    <ligand>
        <name>substrate</name>
    </ligand>
</feature>
<feature type="binding site" evidence="1">
    <location>
        <position position="176"/>
    </location>
    <ligand>
        <name>substrate</name>
    </ligand>
</feature>
<feature type="binding site" evidence="1">
    <location>
        <position position="186"/>
    </location>
    <ligand>
        <name>substrate</name>
    </ligand>
</feature>
<feature type="binding site" evidence="1">
    <location>
        <position position="215"/>
    </location>
    <ligand>
        <name>substrate</name>
    </ligand>
</feature>
<feature type="binding site" evidence="1">
    <location>
        <position position="236"/>
    </location>
    <ligand>
        <name>substrate</name>
    </ligand>
</feature>
<feature type="binding site" evidence="1">
    <location>
        <begin position="259"/>
        <end position="261"/>
    </location>
    <ligand>
        <name>substrate</name>
    </ligand>
</feature>
<feature type="binding site" evidence="1">
    <location>
        <begin position="280"/>
        <end position="282"/>
    </location>
    <ligand>
        <name>substrate</name>
    </ligand>
</feature>
<feature type="sequence conflict" description="In Ref. 2; AAB00467." evidence="4" ref="2">
    <original>R</original>
    <variation>P</variation>
    <location>
        <position position="119"/>
    </location>
</feature>
<sequence length="297" mass="32762">MPPRRYNPDTRRDELLERINLDIPGAVAQALREDLGGTVDANNDITAKLLPENSRSHATVITRENGVFCGKRWVEEVFIQLAGDDVTIIWHVDDGDVINANQSLFELEGPSRVLLTGERTALNFVQTLSGVASKVRHYVELLEGTNTQLLDTRKTLPGLRSALKYAVLCGGGANHRLGLSDAFLIKENHIIASGSVRQAVEKASWLHPDAPVEVEVENLEELDEALKAGADIIMLDNFETEQMREAVKRTNGKALLEVSGNVTDKTLREFAETGVDFISVGALTKHVQALDLSMRFR</sequence>
<keyword id="KW-0328">Glycosyltransferase</keyword>
<keyword id="KW-0662">Pyridine nucleotide biosynthesis</keyword>
<keyword id="KW-1185">Reference proteome</keyword>
<keyword id="KW-0808">Transferase</keyword>
<evidence type="ECO:0000250" key="1"/>
<evidence type="ECO:0000269" key="2">
    <source>
    </source>
</evidence>
<evidence type="ECO:0000303" key="3">
    <source>
    </source>
</evidence>
<evidence type="ECO:0000305" key="4"/>
<evidence type="ECO:0000305" key="5">
    <source>
    </source>
</evidence>